<name>SYH_MALP2</name>
<comment type="catalytic activity">
    <reaction evidence="1">
        <text>tRNA(His) + L-histidine + ATP = L-histidyl-tRNA(His) + AMP + diphosphate + H(+)</text>
        <dbReference type="Rhea" id="RHEA:17313"/>
        <dbReference type="Rhea" id="RHEA-COMP:9665"/>
        <dbReference type="Rhea" id="RHEA-COMP:9689"/>
        <dbReference type="ChEBI" id="CHEBI:15378"/>
        <dbReference type="ChEBI" id="CHEBI:30616"/>
        <dbReference type="ChEBI" id="CHEBI:33019"/>
        <dbReference type="ChEBI" id="CHEBI:57595"/>
        <dbReference type="ChEBI" id="CHEBI:78442"/>
        <dbReference type="ChEBI" id="CHEBI:78527"/>
        <dbReference type="ChEBI" id="CHEBI:456215"/>
        <dbReference type="EC" id="6.1.1.21"/>
    </reaction>
</comment>
<comment type="subunit">
    <text evidence="1">Homodimer.</text>
</comment>
<comment type="subcellular location">
    <subcellularLocation>
        <location evidence="1">Cytoplasm</location>
    </subcellularLocation>
</comment>
<comment type="similarity">
    <text evidence="1">Belongs to the class-II aminoacyl-tRNA synthetase family.</text>
</comment>
<feature type="chain" id="PRO_0000136204" description="Histidine--tRNA ligase">
    <location>
        <begin position="1"/>
        <end position="426"/>
    </location>
</feature>
<gene>
    <name evidence="1" type="primary">hisS</name>
    <name type="ordered locus">MYPE2860</name>
</gene>
<proteinExistence type="inferred from homology"/>
<organism>
    <name type="scientific">Malacoplasma penetrans (strain HF-2)</name>
    <name type="common">Mycoplasma penetrans</name>
    <dbReference type="NCBI Taxonomy" id="272633"/>
    <lineage>
        <taxon>Bacteria</taxon>
        <taxon>Bacillati</taxon>
        <taxon>Mycoplasmatota</taxon>
        <taxon>Mycoplasmoidales</taxon>
        <taxon>Mycoplasmoidaceae</taxon>
        <taxon>Malacoplasma</taxon>
    </lineage>
</organism>
<evidence type="ECO:0000255" key="1">
    <source>
        <dbReference type="HAMAP-Rule" id="MF_00127"/>
    </source>
</evidence>
<sequence length="426" mass="49905">MVIKKPRGTYDLFGEEIEVFNKINDVLKTISNTYNCHEIKTPIFEHKELYIRNIGESSDIVTKEFYDFKDKSDRELALRPENTVGVIRSVVENKLLYTNPFPLKFYYLGPMFRYERPQSGRNRQFYQFGIEFIGVKNILNEIEGILFALDILKKLNITNWKLKVNYIGSIETREKWINSLKKYFNKYKDELSEDSKNRIEKNPLRILDDKVDGSKSFVKSCPKIEEFLTKEEKEESDNFIKCLKTIVNEFEFDSTLVRGLDYYSGPVFEIVSQSNKLTGQSTIIGGGRYTKLTKELGDNDYICFGFALGMERLMLAYRDENQFLSNNSVDVYIASIGSVESELVAMNFANQLRNLNYRVEVNFDLKKIDKQFKNSNKYNPKIILIYGDEDHKNKQVTLKNQKTLENKVIKLNELNNKIKEFFESDK</sequence>
<reference key="1">
    <citation type="journal article" date="2002" name="Nucleic Acids Res.">
        <title>The complete genomic sequence of Mycoplasma penetrans, an intracellular bacterial pathogen in humans.</title>
        <authorList>
            <person name="Sasaki Y."/>
            <person name="Ishikawa J."/>
            <person name="Yamashita A."/>
            <person name="Oshima K."/>
            <person name="Kenri T."/>
            <person name="Furuya K."/>
            <person name="Yoshino C."/>
            <person name="Horino A."/>
            <person name="Shiba T."/>
            <person name="Sasaki T."/>
            <person name="Hattori M."/>
        </authorList>
    </citation>
    <scope>NUCLEOTIDE SEQUENCE [LARGE SCALE GENOMIC DNA]</scope>
    <source>
        <strain>HF-2</strain>
    </source>
</reference>
<keyword id="KW-0030">Aminoacyl-tRNA synthetase</keyword>
<keyword id="KW-0067">ATP-binding</keyword>
<keyword id="KW-0963">Cytoplasm</keyword>
<keyword id="KW-0436">Ligase</keyword>
<keyword id="KW-0547">Nucleotide-binding</keyword>
<keyword id="KW-0648">Protein biosynthesis</keyword>
<keyword id="KW-1185">Reference proteome</keyword>
<accession>Q8EWB8</accession>
<dbReference type="EC" id="6.1.1.21" evidence="1"/>
<dbReference type="EMBL" id="BA000026">
    <property type="protein sequence ID" value="BAC44078.1"/>
    <property type="molecule type" value="Genomic_DNA"/>
</dbReference>
<dbReference type="RefSeq" id="WP_011077114.1">
    <property type="nucleotide sequence ID" value="NC_004432.1"/>
</dbReference>
<dbReference type="SMR" id="Q8EWB8"/>
<dbReference type="FunCoup" id="Q8EWB8">
    <property type="interactions" value="243"/>
</dbReference>
<dbReference type="STRING" id="272633.gene:10731389"/>
<dbReference type="KEGG" id="mpe:MYPE2860"/>
<dbReference type="eggNOG" id="COG0124">
    <property type="taxonomic scope" value="Bacteria"/>
</dbReference>
<dbReference type="HOGENOM" id="CLU_025113_1_2_14"/>
<dbReference type="InParanoid" id="Q8EWB8"/>
<dbReference type="Proteomes" id="UP000002522">
    <property type="component" value="Chromosome"/>
</dbReference>
<dbReference type="GO" id="GO:0005737">
    <property type="term" value="C:cytoplasm"/>
    <property type="evidence" value="ECO:0007669"/>
    <property type="project" value="UniProtKB-SubCell"/>
</dbReference>
<dbReference type="GO" id="GO:0005524">
    <property type="term" value="F:ATP binding"/>
    <property type="evidence" value="ECO:0007669"/>
    <property type="project" value="UniProtKB-UniRule"/>
</dbReference>
<dbReference type="GO" id="GO:0004821">
    <property type="term" value="F:histidine-tRNA ligase activity"/>
    <property type="evidence" value="ECO:0007669"/>
    <property type="project" value="UniProtKB-UniRule"/>
</dbReference>
<dbReference type="GO" id="GO:0006427">
    <property type="term" value="P:histidyl-tRNA aminoacylation"/>
    <property type="evidence" value="ECO:0007669"/>
    <property type="project" value="UniProtKB-UniRule"/>
</dbReference>
<dbReference type="CDD" id="cd00773">
    <property type="entry name" value="HisRS-like_core"/>
    <property type="match status" value="1"/>
</dbReference>
<dbReference type="Gene3D" id="3.40.50.800">
    <property type="entry name" value="Anticodon-binding domain"/>
    <property type="match status" value="1"/>
</dbReference>
<dbReference type="Gene3D" id="3.30.930.10">
    <property type="entry name" value="Bira Bifunctional Protein, Domain 2"/>
    <property type="match status" value="1"/>
</dbReference>
<dbReference type="HAMAP" id="MF_00127">
    <property type="entry name" value="His_tRNA_synth"/>
    <property type="match status" value="1"/>
</dbReference>
<dbReference type="InterPro" id="IPR006195">
    <property type="entry name" value="aa-tRNA-synth_II"/>
</dbReference>
<dbReference type="InterPro" id="IPR045864">
    <property type="entry name" value="aa-tRNA-synth_II/BPL/LPL"/>
</dbReference>
<dbReference type="InterPro" id="IPR004154">
    <property type="entry name" value="Anticodon-bd"/>
</dbReference>
<dbReference type="InterPro" id="IPR036621">
    <property type="entry name" value="Anticodon-bd_dom_sf"/>
</dbReference>
<dbReference type="InterPro" id="IPR015807">
    <property type="entry name" value="His-tRNA-ligase"/>
</dbReference>
<dbReference type="InterPro" id="IPR041715">
    <property type="entry name" value="HisRS-like_core"/>
</dbReference>
<dbReference type="InterPro" id="IPR004516">
    <property type="entry name" value="HisRS/HisZ"/>
</dbReference>
<dbReference type="NCBIfam" id="TIGR00442">
    <property type="entry name" value="hisS"/>
    <property type="match status" value="1"/>
</dbReference>
<dbReference type="PANTHER" id="PTHR43707:SF1">
    <property type="entry name" value="HISTIDINE--TRNA LIGASE, MITOCHONDRIAL-RELATED"/>
    <property type="match status" value="1"/>
</dbReference>
<dbReference type="PANTHER" id="PTHR43707">
    <property type="entry name" value="HISTIDYL-TRNA SYNTHETASE"/>
    <property type="match status" value="1"/>
</dbReference>
<dbReference type="Pfam" id="PF03129">
    <property type="entry name" value="HGTP_anticodon"/>
    <property type="match status" value="1"/>
</dbReference>
<dbReference type="Pfam" id="PF13393">
    <property type="entry name" value="tRNA-synt_His"/>
    <property type="match status" value="1"/>
</dbReference>
<dbReference type="PIRSF" id="PIRSF001549">
    <property type="entry name" value="His-tRNA_synth"/>
    <property type="match status" value="1"/>
</dbReference>
<dbReference type="SUPFAM" id="SSF52954">
    <property type="entry name" value="Class II aaRS ABD-related"/>
    <property type="match status" value="1"/>
</dbReference>
<dbReference type="SUPFAM" id="SSF55681">
    <property type="entry name" value="Class II aaRS and biotin synthetases"/>
    <property type="match status" value="1"/>
</dbReference>
<dbReference type="PROSITE" id="PS50862">
    <property type="entry name" value="AA_TRNA_LIGASE_II"/>
    <property type="match status" value="1"/>
</dbReference>
<protein>
    <recommendedName>
        <fullName evidence="1">Histidine--tRNA ligase</fullName>
        <ecNumber evidence="1">6.1.1.21</ecNumber>
    </recommendedName>
    <alternativeName>
        <fullName evidence="1">Histidyl-tRNA synthetase</fullName>
        <shortName evidence="1">HisRS</shortName>
    </alternativeName>
</protein>